<organism>
    <name type="scientific">Archaeoglobus fulgidus (strain ATCC 49558 / DSM 4304 / JCM 9628 / NBRC 100126 / VC-16)</name>
    <dbReference type="NCBI Taxonomy" id="224325"/>
    <lineage>
        <taxon>Archaea</taxon>
        <taxon>Methanobacteriati</taxon>
        <taxon>Methanobacteriota</taxon>
        <taxon>Archaeoglobi</taxon>
        <taxon>Archaeoglobales</taxon>
        <taxon>Archaeoglobaceae</taxon>
        <taxon>Archaeoglobus</taxon>
    </lineage>
</organism>
<name>CDC62_ARCFU</name>
<reference key="1">
    <citation type="journal article" date="1997" name="Nature">
        <title>The complete genome sequence of the hyperthermophilic, sulphate-reducing archaeon Archaeoglobus fulgidus.</title>
        <authorList>
            <person name="Klenk H.-P."/>
            <person name="Clayton R.A."/>
            <person name="Tomb J.-F."/>
            <person name="White O."/>
            <person name="Nelson K.E."/>
            <person name="Ketchum K.A."/>
            <person name="Dodson R.J."/>
            <person name="Gwinn M.L."/>
            <person name="Hickey E.K."/>
            <person name="Peterson J.D."/>
            <person name="Richardson D.L."/>
            <person name="Kerlavage A.R."/>
            <person name="Graham D.E."/>
            <person name="Kyrpides N.C."/>
            <person name="Fleischmann R.D."/>
            <person name="Quackenbush J."/>
            <person name="Lee N.H."/>
            <person name="Sutton G.G."/>
            <person name="Gill S.R."/>
            <person name="Kirkness E.F."/>
            <person name="Dougherty B.A."/>
            <person name="McKenney K."/>
            <person name="Adams M.D."/>
            <person name="Loftus B.J."/>
            <person name="Peterson S.N."/>
            <person name="Reich C.I."/>
            <person name="McNeil L.K."/>
            <person name="Badger J.H."/>
            <person name="Glodek A."/>
            <person name="Zhou L."/>
            <person name="Overbeek R."/>
            <person name="Gocayne J.D."/>
            <person name="Weidman J.F."/>
            <person name="McDonald L.A."/>
            <person name="Utterback T.R."/>
            <person name="Cotton M.D."/>
            <person name="Spriggs T."/>
            <person name="Artiach P."/>
            <person name="Kaine B.P."/>
            <person name="Sykes S.M."/>
            <person name="Sadow P.W."/>
            <person name="D'Andrea K.P."/>
            <person name="Bowman C."/>
            <person name="Fujii C."/>
            <person name="Garland S.A."/>
            <person name="Mason T.M."/>
            <person name="Olsen G.J."/>
            <person name="Fraser C.M."/>
            <person name="Smith H.O."/>
            <person name="Woese C.R."/>
            <person name="Venter J.C."/>
        </authorList>
    </citation>
    <scope>NUCLEOTIDE SEQUENCE [LARGE SCALE GENOMIC DNA]</scope>
    <source>
        <strain>ATCC 49558 / DSM 4304 / JCM 9628 / NBRC 100126 / VC-16</strain>
    </source>
</reference>
<dbReference type="EMBL" id="AE000782">
    <property type="protein sequence ID" value="AAB90547.1"/>
    <property type="molecule type" value="Genomic_DNA"/>
</dbReference>
<dbReference type="PIR" id="G69336">
    <property type="entry name" value="G69336"/>
</dbReference>
<dbReference type="SMR" id="O29563"/>
<dbReference type="STRING" id="224325.AF_0695"/>
<dbReference type="PaxDb" id="224325-AF_0695"/>
<dbReference type="EnsemblBacteria" id="AAB90547">
    <property type="protein sequence ID" value="AAB90547"/>
    <property type="gene ID" value="AF_0695"/>
</dbReference>
<dbReference type="KEGG" id="afu:AF_0695"/>
<dbReference type="eggNOG" id="arCOG00467">
    <property type="taxonomic scope" value="Archaea"/>
</dbReference>
<dbReference type="HOGENOM" id="CLU_025112_3_0_2"/>
<dbReference type="PhylomeDB" id="O29563"/>
<dbReference type="Proteomes" id="UP000002199">
    <property type="component" value="Chromosome"/>
</dbReference>
<dbReference type="GO" id="GO:0005524">
    <property type="term" value="F:ATP binding"/>
    <property type="evidence" value="ECO:0007669"/>
    <property type="project" value="UniProtKB-UniRule"/>
</dbReference>
<dbReference type="GO" id="GO:0016887">
    <property type="term" value="F:ATP hydrolysis activity"/>
    <property type="evidence" value="ECO:0007669"/>
    <property type="project" value="InterPro"/>
</dbReference>
<dbReference type="GO" id="GO:0006260">
    <property type="term" value="P:DNA replication"/>
    <property type="evidence" value="ECO:0007669"/>
    <property type="project" value="UniProtKB-UniRule"/>
</dbReference>
<dbReference type="Gene3D" id="1.10.8.60">
    <property type="match status" value="1"/>
</dbReference>
<dbReference type="Gene3D" id="3.40.50.300">
    <property type="entry name" value="P-loop containing nucleotide triphosphate hydrolases"/>
    <property type="match status" value="1"/>
</dbReference>
<dbReference type="Gene3D" id="1.10.10.10">
    <property type="entry name" value="Winged helix-like DNA-binding domain superfamily/Winged helix DNA-binding domain"/>
    <property type="match status" value="1"/>
</dbReference>
<dbReference type="HAMAP" id="MF_01407">
    <property type="entry name" value="ORC1_type_DNA_replic_protein"/>
    <property type="match status" value="1"/>
</dbReference>
<dbReference type="InterPro" id="IPR049945">
    <property type="entry name" value="AAA_22"/>
</dbReference>
<dbReference type="InterPro" id="IPR015163">
    <property type="entry name" value="Cdc6_C"/>
</dbReference>
<dbReference type="InterPro" id="IPR055237">
    <property type="entry name" value="Cdc6_lid"/>
</dbReference>
<dbReference type="InterPro" id="IPR050311">
    <property type="entry name" value="ORC1/CDC6"/>
</dbReference>
<dbReference type="InterPro" id="IPR014277">
    <property type="entry name" value="Orc1/Cdc6_arc"/>
</dbReference>
<dbReference type="InterPro" id="IPR027417">
    <property type="entry name" value="P-loop_NTPase"/>
</dbReference>
<dbReference type="InterPro" id="IPR036388">
    <property type="entry name" value="WH-like_DNA-bd_sf"/>
</dbReference>
<dbReference type="InterPro" id="IPR036390">
    <property type="entry name" value="WH_DNA-bd_sf"/>
</dbReference>
<dbReference type="NCBIfam" id="TIGR02928">
    <property type="entry name" value="orc1/cdc6 family replication initiation protein"/>
    <property type="match status" value="1"/>
</dbReference>
<dbReference type="NCBIfam" id="NF001624">
    <property type="entry name" value="PRK00411.1-2"/>
    <property type="match status" value="1"/>
</dbReference>
<dbReference type="PANTHER" id="PTHR10763:SF26">
    <property type="entry name" value="CELL DIVISION CONTROL PROTEIN 6 HOMOLOG"/>
    <property type="match status" value="1"/>
</dbReference>
<dbReference type="PANTHER" id="PTHR10763">
    <property type="entry name" value="CELL DIVISION CONTROL PROTEIN 6-RELATED"/>
    <property type="match status" value="1"/>
</dbReference>
<dbReference type="Pfam" id="PF13401">
    <property type="entry name" value="AAA_22"/>
    <property type="match status" value="1"/>
</dbReference>
<dbReference type="Pfam" id="PF22703">
    <property type="entry name" value="Cdc6_lid"/>
    <property type="match status" value="1"/>
</dbReference>
<dbReference type="SMART" id="SM01074">
    <property type="entry name" value="Cdc6_C"/>
    <property type="match status" value="1"/>
</dbReference>
<dbReference type="SUPFAM" id="SSF52540">
    <property type="entry name" value="P-loop containing nucleoside triphosphate hydrolases"/>
    <property type="match status" value="1"/>
</dbReference>
<dbReference type="SUPFAM" id="SSF46785">
    <property type="entry name" value="Winged helix' DNA-binding domain"/>
    <property type="match status" value="1"/>
</dbReference>
<evidence type="ECO:0000255" key="1">
    <source>
        <dbReference type="HAMAP-Rule" id="MF_01407"/>
    </source>
</evidence>
<sequence length="376" mass="42978">MQVKRIIHINVSFTLMLSWDETLFKNPEVFDPDYIPDELLFRDGQIRQLVSCIKPAMLNSSPINAFCLGPPSTGKTSTIRYVLREAERETGLLYSYIRIPRFKEPYKVFSKIFQDVLGQQSPPSGISKTVLMDRVWSNLDEPLLVVLDDINFLGKNYANEILYEILKAPDEYGVKVGIVAAATDVKFPLLLDPFVGASFHYMEIHYPSYGYAEIEGILRKRVEHGFYEGVFDDGAFRRVVELAYRASDVRYGIYLLKAAGMNAESRGSRKVEERDVEVAHAGESLSFIAKILTALNSEERAVLRMIYSQNAISTGDLYEQVCSEIKMSYRKYYNILEKLERLKLIEISFGEKGRGKTRYVQGKYDAEVVDRAMQLI</sequence>
<accession>O29563</accession>
<keyword id="KW-0067">ATP-binding</keyword>
<keyword id="KW-0235">DNA replication</keyword>
<keyword id="KW-0547">Nucleotide-binding</keyword>
<keyword id="KW-1185">Reference proteome</keyword>
<proteinExistence type="inferred from homology"/>
<gene>
    <name type="primary">cdc6-2</name>
    <name type="ordered locus">AF_0695</name>
</gene>
<comment type="function">
    <text evidence="1">Involved in regulation of DNA replication.</text>
</comment>
<comment type="similarity">
    <text evidence="1">Belongs to the CDC6/cdc18 family.</text>
</comment>
<protein>
    <recommendedName>
        <fullName evidence="1">ORC1-type DNA replication protein 2</fullName>
    </recommendedName>
</protein>
<feature type="chain" id="PRO_0000150983" description="ORC1-type DNA replication protein 2">
    <location>
        <begin position="1"/>
        <end position="376"/>
    </location>
</feature>
<feature type="binding site" evidence="1">
    <location>
        <begin position="73"/>
        <end position="77"/>
    </location>
    <ligand>
        <name>ATP</name>
        <dbReference type="ChEBI" id="CHEBI:30616"/>
    </ligand>
</feature>
<feature type="binding site" evidence="1">
    <location>
        <position position="209"/>
    </location>
    <ligand>
        <name>ATP</name>
        <dbReference type="ChEBI" id="CHEBI:30616"/>
    </ligand>
</feature>
<feature type="binding site" evidence="1">
    <location>
        <position position="221"/>
    </location>
    <ligand>
        <name>ATP</name>
        <dbReference type="ChEBI" id="CHEBI:30616"/>
    </ligand>
</feature>